<accession>Q5L6N4</accession>
<feature type="chain" id="PRO_0000284183" description="Endoribonuclease YbeY">
    <location>
        <begin position="1"/>
        <end position="158"/>
    </location>
</feature>
<feature type="binding site" evidence="1">
    <location>
        <position position="119"/>
    </location>
    <ligand>
        <name>Zn(2+)</name>
        <dbReference type="ChEBI" id="CHEBI:29105"/>
        <note>catalytic</note>
    </ligand>
</feature>
<feature type="binding site" evidence="1">
    <location>
        <position position="123"/>
    </location>
    <ligand>
        <name>Zn(2+)</name>
        <dbReference type="ChEBI" id="CHEBI:29105"/>
        <note>catalytic</note>
    </ligand>
</feature>
<feature type="binding site" evidence="1">
    <location>
        <position position="129"/>
    </location>
    <ligand>
        <name>Zn(2+)</name>
        <dbReference type="ChEBI" id="CHEBI:29105"/>
        <note>catalytic</note>
    </ligand>
</feature>
<protein>
    <recommendedName>
        <fullName evidence="1">Endoribonuclease YbeY</fullName>
        <ecNumber evidence="1">3.1.-.-</ecNumber>
    </recommendedName>
</protein>
<organism>
    <name type="scientific">Chlamydia abortus (strain DSM 27085 / S26/3)</name>
    <name type="common">Chlamydophila abortus</name>
    <dbReference type="NCBI Taxonomy" id="218497"/>
    <lineage>
        <taxon>Bacteria</taxon>
        <taxon>Pseudomonadati</taxon>
        <taxon>Chlamydiota</taxon>
        <taxon>Chlamydiia</taxon>
        <taxon>Chlamydiales</taxon>
        <taxon>Chlamydiaceae</taxon>
        <taxon>Chlamydia/Chlamydophila group</taxon>
        <taxon>Chlamydia</taxon>
    </lineage>
</organism>
<comment type="function">
    <text evidence="1">Single strand-specific metallo-endoribonuclease involved in late-stage 70S ribosome quality control and in maturation of the 3' terminus of the 16S rRNA.</text>
</comment>
<comment type="cofactor">
    <cofactor evidence="1">
        <name>Zn(2+)</name>
        <dbReference type="ChEBI" id="CHEBI:29105"/>
    </cofactor>
    <text evidence="1">Binds 1 zinc ion.</text>
</comment>
<comment type="subcellular location">
    <subcellularLocation>
        <location evidence="1">Cytoplasm</location>
    </subcellularLocation>
</comment>
<comment type="similarity">
    <text evidence="1">Belongs to the endoribonuclease YbeY family.</text>
</comment>
<proteinExistence type="inferred from homology"/>
<gene>
    <name evidence="1" type="primary">ybeY</name>
    <name type="ordered locus">CAB231</name>
</gene>
<evidence type="ECO:0000255" key="1">
    <source>
        <dbReference type="HAMAP-Rule" id="MF_00009"/>
    </source>
</evidence>
<sequence length="158" mass="18087">MKKVPLQVCVSNKQCDVPIRIQSVKKLVLCCLQCWKVSTDQVYVYFLDDEALAQLHDEVFADPSLTDTITLPIDSPESTAHPHILGEAFISPKAAIRFLQDRAEDTDLLYEEISRYVVHSLLHMLGYDDQTPEERKKMRGKENQALCMLREKHALLSD</sequence>
<reference key="1">
    <citation type="journal article" date="2005" name="Genome Res.">
        <title>The Chlamydophila abortus genome sequence reveals an array of variable proteins that contribute to interspecies variation.</title>
        <authorList>
            <person name="Thomson N.R."/>
            <person name="Yeats C."/>
            <person name="Bell K."/>
            <person name="Holden M.T.G."/>
            <person name="Bentley S.D."/>
            <person name="Livingstone M."/>
            <person name="Cerdeno-Tarraga A.-M."/>
            <person name="Harris B."/>
            <person name="Doggett J."/>
            <person name="Ormond D."/>
            <person name="Mungall K."/>
            <person name="Clarke K."/>
            <person name="Feltwell T."/>
            <person name="Hance Z."/>
            <person name="Sanders M."/>
            <person name="Quail M.A."/>
            <person name="Price C."/>
            <person name="Barrell B.G."/>
            <person name="Parkhill J."/>
            <person name="Longbottom D."/>
        </authorList>
    </citation>
    <scope>NUCLEOTIDE SEQUENCE [LARGE SCALE GENOMIC DNA]</scope>
    <source>
        <strain>DSM 27085 / S26/3</strain>
    </source>
</reference>
<keyword id="KW-0963">Cytoplasm</keyword>
<keyword id="KW-0255">Endonuclease</keyword>
<keyword id="KW-0378">Hydrolase</keyword>
<keyword id="KW-0479">Metal-binding</keyword>
<keyword id="KW-0540">Nuclease</keyword>
<keyword id="KW-0690">Ribosome biogenesis</keyword>
<keyword id="KW-0698">rRNA processing</keyword>
<keyword id="KW-0862">Zinc</keyword>
<name>YBEY_CHLAB</name>
<dbReference type="EC" id="3.1.-.-" evidence="1"/>
<dbReference type="EMBL" id="CR848038">
    <property type="protein sequence ID" value="CAH63687.1"/>
    <property type="molecule type" value="Genomic_DNA"/>
</dbReference>
<dbReference type="RefSeq" id="WP_011096918.1">
    <property type="nucleotide sequence ID" value="NC_004552.2"/>
</dbReference>
<dbReference type="SMR" id="Q5L6N4"/>
<dbReference type="KEGG" id="cab:CAB231"/>
<dbReference type="eggNOG" id="COG0319">
    <property type="taxonomic scope" value="Bacteria"/>
</dbReference>
<dbReference type="HOGENOM" id="CLU_106710_2_0_0"/>
<dbReference type="OrthoDB" id="9807740at2"/>
<dbReference type="Proteomes" id="UP000001012">
    <property type="component" value="Chromosome"/>
</dbReference>
<dbReference type="GO" id="GO:0005737">
    <property type="term" value="C:cytoplasm"/>
    <property type="evidence" value="ECO:0007669"/>
    <property type="project" value="UniProtKB-SubCell"/>
</dbReference>
<dbReference type="GO" id="GO:0004222">
    <property type="term" value="F:metalloendopeptidase activity"/>
    <property type="evidence" value="ECO:0007669"/>
    <property type="project" value="InterPro"/>
</dbReference>
<dbReference type="GO" id="GO:0004521">
    <property type="term" value="F:RNA endonuclease activity"/>
    <property type="evidence" value="ECO:0007669"/>
    <property type="project" value="UniProtKB-UniRule"/>
</dbReference>
<dbReference type="GO" id="GO:0008270">
    <property type="term" value="F:zinc ion binding"/>
    <property type="evidence" value="ECO:0007669"/>
    <property type="project" value="UniProtKB-UniRule"/>
</dbReference>
<dbReference type="GO" id="GO:0006364">
    <property type="term" value="P:rRNA processing"/>
    <property type="evidence" value="ECO:0007669"/>
    <property type="project" value="UniProtKB-UniRule"/>
</dbReference>
<dbReference type="Gene3D" id="3.40.390.30">
    <property type="entry name" value="Metalloproteases ('zincins'), catalytic domain"/>
    <property type="match status" value="1"/>
</dbReference>
<dbReference type="HAMAP" id="MF_00009">
    <property type="entry name" value="Endoribonucl_YbeY"/>
    <property type="match status" value="1"/>
</dbReference>
<dbReference type="InterPro" id="IPR023091">
    <property type="entry name" value="MetalPrtase_cat_dom_sf_prd"/>
</dbReference>
<dbReference type="InterPro" id="IPR002036">
    <property type="entry name" value="YbeY"/>
</dbReference>
<dbReference type="NCBIfam" id="TIGR00043">
    <property type="entry name" value="rRNA maturation RNase YbeY"/>
    <property type="match status" value="1"/>
</dbReference>
<dbReference type="Pfam" id="PF02130">
    <property type="entry name" value="YbeY"/>
    <property type="match status" value="1"/>
</dbReference>
<dbReference type="SUPFAM" id="SSF55486">
    <property type="entry name" value="Metalloproteases ('zincins'), catalytic domain"/>
    <property type="match status" value="1"/>
</dbReference>